<dbReference type="EC" id="1.1.1.25" evidence="1"/>
<dbReference type="EMBL" id="CP001407">
    <property type="protein sequence ID" value="ACO29972.1"/>
    <property type="molecule type" value="Genomic_DNA"/>
</dbReference>
<dbReference type="RefSeq" id="WP_000812098.1">
    <property type="nucleotide sequence ID" value="NC_012472.1"/>
</dbReference>
<dbReference type="SMR" id="C1ESM8"/>
<dbReference type="KEGG" id="bcx:BCA_4445"/>
<dbReference type="PATRIC" id="fig|572264.18.peg.4393"/>
<dbReference type="UniPathway" id="UPA00053">
    <property type="reaction ID" value="UER00087"/>
</dbReference>
<dbReference type="Proteomes" id="UP000002210">
    <property type="component" value="Chromosome"/>
</dbReference>
<dbReference type="GO" id="GO:0005829">
    <property type="term" value="C:cytosol"/>
    <property type="evidence" value="ECO:0007669"/>
    <property type="project" value="TreeGrafter"/>
</dbReference>
<dbReference type="GO" id="GO:0050661">
    <property type="term" value="F:NADP binding"/>
    <property type="evidence" value="ECO:0007669"/>
    <property type="project" value="InterPro"/>
</dbReference>
<dbReference type="GO" id="GO:0004764">
    <property type="term" value="F:shikimate 3-dehydrogenase (NADP+) activity"/>
    <property type="evidence" value="ECO:0007669"/>
    <property type="project" value="UniProtKB-UniRule"/>
</dbReference>
<dbReference type="GO" id="GO:0008652">
    <property type="term" value="P:amino acid biosynthetic process"/>
    <property type="evidence" value="ECO:0007669"/>
    <property type="project" value="UniProtKB-KW"/>
</dbReference>
<dbReference type="GO" id="GO:0009073">
    <property type="term" value="P:aromatic amino acid family biosynthetic process"/>
    <property type="evidence" value="ECO:0007669"/>
    <property type="project" value="UniProtKB-KW"/>
</dbReference>
<dbReference type="GO" id="GO:0009423">
    <property type="term" value="P:chorismate biosynthetic process"/>
    <property type="evidence" value="ECO:0007669"/>
    <property type="project" value="UniProtKB-UniRule"/>
</dbReference>
<dbReference type="GO" id="GO:0019632">
    <property type="term" value="P:shikimate metabolic process"/>
    <property type="evidence" value="ECO:0007669"/>
    <property type="project" value="InterPro"/>
</dbReference>
<dbReference type="CDD" id="cd01065">
    <property type="entry name" value="NAD_bind_Shikimate_DH"/>
    <property type="match status" value="1"/>
</dbReference>
<dbReference type="FunFam" id="3.40.50.10860:FF:000011">
    <property type="entry name" value="Shikimate dehydrogenase (NADP(+))"/>
    <property type="match status" value="1"/>
</dbReference>
<dbReference type="Gene3D" id="3.40.50.10860">
    <property type="entry name" value="Leucine Dehydrogenase, chain A, domain 1"/>
    <property type="match status" value="1"/>
</dbReference>
<dbReference type="Gene3D" id="3.40.50.720">
    <property type="entry name" value="NAD(P)-binding Rossmann-like Domain"/>
    <property type="match status" value="1"/>
</dbReference>
<dbReference type="HAMAP" id="MF_00222">
    <property type="entry name" value="Shikimate_DH_AroE"/>
    <property type="match status" value="1"/>
</dbReference>
<dbReference type="InterPro" id="IPR046346">
    <property type="entry name" value="Aminoacid_DH-like_N_sf"/>
</dbReference>
<dbReference type="InterPro" id="IPR036291">
    <property type="entry name" value="NAD(P)-bd_dom_sf"/>
</dbReference>
<dbReference type="InterPro" id="IPR041121">
    <property type="entry name" value="SDH_C"/>
</dbReference>
<dbReference type="InterPro" id="IPR011342">
    <property type="entry name" value="Shikimate_DH"/>
</dbReference>
<dbReference type="InterPro" id="IPR013708">
    <property type="entry name" value="Shikimate_DH-bd_N"/>
</dbReference>
<dbReference type="InterPro" id="IPR022893">
    <property type="entry name" value="Shikimate_DH_fam"/>
</dbReference>
<dbReference type="InterPro" id="IPR006151">
    <property type="entry name" value="Shikm_DH/Glu-tRNA_Rdtase"/>
</dbReference>
<dbReference type="NCBIfam" id="TIGR00507">
    <property type="entry name" value="aroE"/>
    <property type="match status" value="1"/>
</dbReference>
<dbReference type="NCBIfam" id="NF001319">
    <property type="entry name" value="PRK00258.3-3"/>
    <property type="match status" value="1"/>
</dbReference>
<dbReference type="PANTHER" id="PTHR21089:SF1">
    <property type="entry name" value="BIFUNCTIONAL 3-DEHYDROQUINATE DEHYDRATASE_SHIKIMATE DEHYDROGENASE, CHLOROPLASTIC"/>
    <property type="match status" value="1"/>
</dbReference>
<dbReference type="PANTHER" id="PTHR21089">
    <property type="entry name" value="SHIKIMATE DEHYDROGENASE"/>
    <property type="match status" value="1"/>
</dbReference>
<dbReference type="Pfam" id="PF18317">
    <property type="entry name" value="SDH_C"/>
    <property type="match status" value="1"/>
</dbReference>
<dbReference type="Pfam" id="PF01488">
    <property type="entry name" value="Shikimate_DH"/>
    <property type="match status" value="1"/>
</dbReference>
<dbReference type="Pfam" id="PF08501">
    <property type="entry name" value="Shikimate_dh_N"/>
    <property type="match status" value="1"/>
</dbReference>
<dbReference type="SUPFAM" id="SSF53223">
    <property type="entry name" value="Aminoacid dehydrogenase-like, N-terminal domain"/>
    <property type="match status" value="1"/>
</dbReference>
<dbReference type="SUPFAM" id="SSF51735">
    <property type="entry name" value="NAD(P)-binding Rossmann-fold domains"/>
    <property type="match status" value="1"/>
</dbReference>
<evidence type="ECO:0000255" key="1">
    <source>
        <dbReference type="HAMAP-Rule" id="MF_00222"/>
    </source>
</evidence>
<organism>
    <name type="scientific">Bacillus cereus (strain 03BB102)</name>
    <dbReference type="NCBI Taxonomy" id="572264"/>
    <lineage>
        <taxon>Bacteria</taxon>
        <taxon>Bacillati</taxon>
        <taxon>Bacillota</taxon>
        <taxon>Bacilli</taxon>
        <taxon>Bacillales</taxon>
        <taxon>Bacillaceae</taxon>
        <taxon>Bacillus</taxon>
        <taxon>Bacillus cereus group</taxon>
    </lineage>
</organism>
<protein>
    <recommendedName>
        <fullName evidence="1">Shikimate dehydrogenase (NADP(+))</fullName>
        <shortName evidence="1">SDH</shortName>
        <ecNumber evidence="1">1.1.1.25</ecNumber>
    </recommendedName>
</protein>
<comment type="function">
    <text evidence="1">Involved in the biosynthesis of the chorismate, which leads to the biosynthesis of aromatic amino acids. Catalyzes the reversible NADPH linked reduction of 3-dehydroshikimate (DHSA) to yield shikimate (SA).</text>
</comment>
<comment type="catalytic activity">
    <reaction evidence="1">
        <text>shikimate + NADP(+) = 3-dehydroshikimate + NADPH + H(+)</text>
        <dbReference type="Rhea" id="RHEA:17737"/>
        <dbReference type="ChEBI" id="CHEBI:15378"/>
        <dbReference type="ChEBI" id="CHEBI:16630"/>
        <dbReference type="ChEBI" id="CHEBI:36208"/>
        <dbReference type="ChEBI" id="CHEBI:57783"/>
        <dbReference type="ChEBI" id="CHEBI:58349"/>
        <dbReference type="EC" id="1.1.1.25"/>
    </reaction>
</comment>
<comment type="pathway">
    <text evidence="1">Metabolic intermediate biosynthesis; chorismate biosynthesis; chorismate from D-erythrose 4-phosphate and phosphoenolpyruvate: step 4/7.</text>
</comment>
<comment type="subunit">
    <text evidence="1">Homodimer.</text>
</comment>
<comment type="similarity">
    <text evidence="1">Belongs to the shikimate dehydrogenase family.</text>
</comment>
<gene>
    <name evidence="1" type="primary">aroE</name>
    <name type="ordered locus">BCA_4445</name>
</gene>
<reference key="1">
    <citation type="submission" date="2009-02" db="EMBL/GenBank/DDBJ databases">
        <title>Genome sequence of Bacillus cereus 03BB102.</title>
        <authorList>
            <person name="Dodson R.J."/>
            <person name="Jackson P."/>
            <person name="Munk A.C."/>
            <person name="Brettin T."/>
            <person name="Bruce D."/>
            <person name="Detter C."/>
            <person name="Tapia R."/>
            <person name="Han C."/>
            <person name="Sutton G."/>
            <person name="Sims D."/>
        </authorList>
    </citation>
    <scope>NUCLEOTIDE SEQUENCE [LARGE SCALE GENOMIC DNA]</scope>
    <source>
        <strain>03BB102</strain>
    </source>
</reference>
<proteinExistence type="inferred from homology"/>
<sequence>MKQLYGVIGNPIGHSLSPVMHNDAFEHLNMDAHYHAFLVKEEVLGEAVRGLKALGISGFNVTTPHKVAIMDYLDEIDPLAKQIGAVNTVVHKNGKLTGYNTDGIGFVRALQSISSEPLQEKRILLLGAGGASRAIYFSLADAGVKEIDVANRTVDKAKELIAACTATVHSVALSLEKATKEQGSYDIIIQTTTIGMHPRVEHTPLQISSLKKGTIVSDIIYNPFETKILCEAKEQGAIIQNGIDMFVYQGALAFEMWTGCVPNIERMKQLVIRKLGG</sequence>
<feature type="chain" id="PRO_1000124873" description="Shikimate dehydrogenase (NADP(+))">
    <location>
        <begin position="1"/>
        <end position="277"/>
    </location>
</feature>
<feature type="active site" description="Proton acceptor" evidence="1">
    <location>
        <position position="66"/>
    </location>
</feature>
<feature type="binding site" evidence="1">
    <location>
        <begin position="15"/>
        <end position="17"/>
    </location>
    <ligand>
        <name>shikimate</name>
        <dbReference type="ChEBI" id="CHEBI:36208"/>
    </ligand>
</feature>
<feature type="binding site" evidence="1">
    <location>
        <position position="62"/>
    </location>
    <ligand>
        <name>shikimate</name>
        <dbReference type="ChEBI" id="CHEBI:36208"/>
    </ligand>
</feature>
<feature type="binding site" evidence="1">
    <location>
        <position position="87"/>
    </location>
    <ligand>
        <name>shikimate</name>
        <dbReference type="ChEBI" id="CHEBI:36208"/>
    </ligand>
</feature>
<feature type="binding site" evidence="1">
    <location>
        <position position="102"/>
    </location>
    <ligand>
        <name>shikimate</name>
        <dbReference type="ChEBI" id="CHEBI:36208"/>
    </ligand>
</feature>
<feature type="binding site" evidence="1">
    <location>
        <begin position="127"/>
        <end position="131"/>
    </location>
    <ligand>
        <name>NADP(+)</name>
        <dbReference type="ChEBI" id="CHEBI:58349"/>
    </ligand>
</feature>
<feature type="binding site" evidence="1">
    <location>
        <begin position="151"/>
        <end position="156"/>
    </location>
    <ligand>
        <name>NADP(+)</name>
        <dbReference type="ChEBI" id="CHEBI:58349"/>
    </ligand>
</feature>
<feature type="binding site" evidence="1">
    <location>
        <position position="219"/>
    </location>
    <ligand>
        <name>NADP(+)</name>
        <dbReference type="ChEBI" id="CHEBI:58349"/>
    </ligand>
</feature>
<feature type="binding site" evidence="1">
    <location>
        <position position="221"/>
    </location>
    <ligand>
        <name>shikimate</name>
        <dbReference type="ChEBI" id="CHEBI:36208"/>
    </ligand>
</feature>
<feature type="binding site" evidence="1">
    <location>
        <position position="242"/>
    </location>
    <ligand>
        <name>NADP(+)</name>
        <dbReference type="ChEBI" id="CHEBI:58349"/>
    </ligand>
</feature>
<keyword id="KW-0028">Amino-acid biosynthesis</keyword>
<keyword id="KW-0057">Aromatic amino acid biosynthesis</keyword>
<keyword id="KW-0521">NADP</keyword>
<keyword id="KW-0560">Oxidoreductase</keyword>
<name>AROE_BACC3</name>
<accession>C1ESM8</accession>